<protein>
    <recommendedName>
        <fullName>Glutamyl-tRNA(Gln) amidotransferase subunit C</fullName>
        <shortName>Glu-ADT subunit C</shortName>
        <ecNumber>6.3.5.-</ecNumber>
    </recommendedName>
</protein>
<comment type="function">
    <text evidence="1">Allows the formation of correctly charged Asn-tRNA(Asn) or Gln-tRNA(Gln) through the transamidation of misacylated Asp-tRNA(Asn) or Glu-tRNA(Gln) in organisms which lack either or both of asparaginyl-tRNA or glutaminyl-tRNA synthetases. The reaction takes place in the presence of glutamine and ATP through an activated phospho-Asp-tRNA(Asn) or phospho-Glu-tRNA(Gln) (By similarity).</text>
</comment>
<comment type="catalytic activity">
    <reaction>
        <text>L-glutamyl-tRNA(Gln) + L-glutamine + ATP + H2O = L-glutaminyl-tRNA(Gln) + L-glutamate + ADP + phosphate + H(+)</text>
        <dbReference type="Rhea" id="RHEA:17521"/>
        <dbReference type="Rhea" id="RHEA-COMP:9681"/>
        <dbReference type="Rhea" id="RHEA-COMP:9684"/>
        <dbReference type="ChEBI" id="CHEBI:15377"/>
        <dbReference type="ChEBI" id="CHEBI:15378"/>
        <dbReference type="ChEBI" id="CHEBI:29985"/>
        <dbReference type="ChEBI" id="CHEBI:30616"/>
        <dbReference type="ChEBI" id="CHEBI:43474"/>
        <dbReference type="ChEBI" id="CHEBI:58359"/>
        <dbReference type="ChEBI" id="CHEBI:78520"/>
        <dbReference type="ChEBI" id="CHEBI:78521"/>
        <dbReference type="ChEBI" id="CHEBI:456216"/>
    </reaction>
</comment>
<comment type="catalytic activity">
    <reaction>
        <text>L-aspartyl-tRNA(Asn) + L-glutamine + ATP + H2O = L-asparaginyl-tRNA(Asn) + L-glutamate + ADP + phosphate + 2 H(+)</text>
        <dbReference type="Rhea" id="RHEA:14513"/>
        <dbReference type="Rhea" id="RHEA-COMP:9674"/>
        <dbReference type="Rhea" id="RHEA-COMP:9677"/>
        <dbReference type="ChEBI" id="CHEBI:15377"/>
        <dbReference type="ChEBI" id="CHEBI:15378"/>
        <dbReference type="ChEBI" id="CHEBI:29985"/>
        <dbReference type="ChEBI" id="CHEBI:30616"/>
        <dbReference type="ChEBI" id="CHEBI:43474"/>
        <dbReference type="ChEBI" id="CHEBI:58359"/>
        <dbReference type="ChEBI" id="CHEBI:78515"/>
        <dbReference type="ChEBI" id="CHEBI:78516"/>
        <dbReference type="ChEBI" id="CHEBI:456216"/>
    </reaction>
</comment>
<comment type="subunit">
    <text evidence="1">Heterotrimer of A, B and C subunits.</text>
</comment>
<comment type="similarity">
    <text evidence="2">Belongs to the GatC family.</text>
</comment>
<name>GATC_MYCLE</name>
<accession>O33104</accession>
<reference key="1">
    <citation type="journal article" date="2001" name="Nature">
        <title>Massive gene decay in the leprosy bacillus.</title>
        <authorList>
            <person name="Cole S.T."/>
            <person name="Eiglmeier K."/>
            <person name="Parkhill J."/>
            <person name="James K.D."/>
            <person name="Thomson N.R."/>
            <person name="Wheeler P.R."/>
            <person name="Honore N."/>
            <person name="Garnier T."/>
            <person name="Churcher C.M."/>
            <person name="Harris D.E."/>
            <person name="Mungall K.L."/>
            <person name="Basham D."/>
            <person name="Brown D."/>
            <person name="Chillingworth T."/>
            <person name="Connor R."/>
            <person name="Davies R.M."/>
            <person name="Devlin K."/>
            <person name="Duthoy S."/>
            <person name="Feltwell T."/>
            <person name="Fraser A."/>
            <person name="Hamlin N."/>
            <person name="Holroyd S."/>
            <person name="Hornsby T."/>
            <person name="Jagels K."/>
            <person name="Lacroix C."/>
            <person name="Maclean J."/>
            <person name="Moule S."/>
            <person name="Murphy L.D."/>
            <person name="Oliver K."/>
            <person name="Quail M.A."/>
            <person name="Rajandream M.A."/>
            <person name="Rutherford K.M."/>
            <person name="Rutter S."/>
            <person name="Seeger K."/>
            <person name="Simon S."/>
            <person name="Simmonds M."/>
            <person name="Skelton J."/>
            <person name="Squares R."/>
            <person name="Squares S."/>
            <person name="Stevens K."/>
            <person name="Taylor K."/>
            <person name="Whitehead S."/>
            <person name="Woodward J.R."/>
            <person name="Barrell B.G."/>
        </authorList>
    </citation>
    <scope>NUCLEOTIDE SEQUENCE [LARGE SCALE GENOMIC DNA]</scope>
    <source>
        <strain>TN</strain>
    </source>
</reference>
<feature type="chain" id="PRO_0000105311" description="Glutamyl-tRNA(Gln) amidotransferase subunit C">
    <location>
        <begin position="1"/>
        <end position="99"/>
    </location>
</feature>
<gene>
    <name type="primary">gatC</name>
    <name type="ordered locus">ML1703</name>
    <name type="ORF">MLCB637.12</name>
</gene>
<proteinExistence type="inferred from homology"/>
<dbReference type="EC" id="6.3.5.-"/>
<dbReference type="EMBL" id="Z99263">
    <property type="protein sequence ID" value="CAB16427.1"/>
    <property type="molecule type" value="Genomic_DNA"/>
</dbReference>
<dbReference type="EMBL" id="AL583923">
    <property type="protein sequence ID" value="CAC30656.1"/>
    <property type="molecule type" value="Genomic_DNA"/>
</dbReference>
<dbReference type="PIR" id="T45405">
    <property type="entry name" value="T45405"/>
</dbReference>
<dbReference type="RefSeq" id="NP_302172.1">
    <property type="nucleotide sequence ID" value="NC_002677.1"/>
</dbReference>
<dbReference type="RefSeq" id="WP_010908493.1">
    <property type="nucleotide sequence ID" value="NC_002677.1"/>
</dbReference>
<dbReference type="SMR" id="O33104"/>
<dbReference type="STRING" id="272631.gene:17575548"/>
<dbReference type="KEGG" id="mle:ML1703"/>
<dbReference type="PATRIC" id="fig|272631.5.peg.3211"/>
<dbReference type="Leproma" id="ML1703"/>
<dbReference type="eggNOG" id="COG0721">
    <property type="taxonomic scope" value="Bacteria"/>
</dbReference>
<dbReference type="HOGENOM" id="CLU_105899_1_0_11"/>
<dbReference type="OrthoDB" id="5295223at2"/>
<dbReference type="Proteomes" id="UP000000806">
    <property type="component" value="Chromosome"/>
</dbReference>
<dbReference type="GO" id="GO:0050566">
    <property type="term" value="F:asparaginyl-tRNA synthase (glutamine-hydrolyzing) activity"/>
    <property type="evidence" value="ECO:0007669"/>
    <property type="project" value="RHEA"/>
</dbReference>
<dbReference type="GO" id="GO:0005524">
    <property type="term" value="F:ATP binding"/>
    <property type="evidence" value="ECO:0007669"/>
    <property type="project" value="UniProtKB-KW"/>
</dbReference>
<dbReference type="GO" id="GO:0050567">
    <property type="term" value="F:glutaminyl-tRNA synthase (glutamine-hydrolyzing) activity"/>
    <property type="evidence" value="ECO:0007669"/>
    <property type="project" value="UniProtKB-UniRule"/>
</dbReference>
<dbReference type="GO" id="GO:0070681">
    <property type="term" value="P:glutaminyl-tRNAGln biosynthesis via transamidation"/>
    <property type="evidence" value="ECO:0007669"/>
    <property type="project" value="TreeGrafter"/>
</dbReference>
<dbReference type="GO" id="GO:0006450">
    <property type="term" value="P:regulation of translational fidelity"/>
    <property type="evidence" value="ECO:0007669"/>
    <property type="project" value="InterPro"/>
</dbReference>
<dbReference type="GO" id="GO:0006412">
    <property type="term" value="P:translation"/>
    <property type="evidence" value="ECO:0007669"/>
    <property type="project" value="UniProtKB-UniRule"/>
</dbReference>
<dbReference type="Gene3D" id="1.10.20.60">
    <property type="entry name" value="Glu-tRNAGln amidotransferase C subunit, N-terminal domain"/>
    <property type="match status" value="1"/>
</dbReference>
<dbReference type="HAMAP" id="MF_00122">
    <property type="entry name" value="GatC"/>
    <property type="match status" value="1"/>
</dbReference>
<dbReference type="InterPro" id="IPR036113">
    <property type="entry name" value="Asp/Glu-ADT_sf_sub_c"/>
</dbReference>
<dbReference type="InterPro" id="IPR003837">
    <property type="entry name" value="GatC"/>
</dbReference>
<dbReference type="NCBIfam" id="TIGR00135">
    <property type="entry name" value="gatC"/>
    <property type="match status" value="1"/>
</dbReference>
<dbReference type="PANTHER" id="PTHR15004">
    <property type="entry name" value="GLUTAMYL-TRNA(GLN) AMIDOTRANSFERASE SUBUNIT C, MITOCHONDRIAL"/>
    <property type="match status" value="1"/>
</dbReference>
<dbReference type="PANTHER" id="PTHR15004:SF0">
    <property type="entry name" value="GLUTAMYL-TRNA(GLN) AMIDOTRANSFERASE SUBUNIT C, MITOCHONDRIAL"/>
    <property type="match status" value="1"/>
</dbReference>
<dbReference type="Pfam" id="PF02686">
    <property type="entry name" value="GatC"/>
    <property type="match status" value="1"/>
</dbReference>
<dbReference type="SUPFAM" id="SSF141000">
    <property type="entry name" value="Glu-tRNAGln amidotransferase C subunit"/>
    <property type="match status" value="1"/>
</dbReference>
<sequence>MSPISRDEVLHLARLTRLVLTDTELASFSSQLDVILAHVSQIQAVDVTGVEPTDNPLKYVNITRPDETVPCLTQQQALAEAPEAIYGRFVVPQILGDNK</sequence>
<evidence type="ECO:0000250" key="1"/>
<evidence type="ECO:0000305" key="2"/>
<organism>
    <name type="scientific">Mycobacterium leprae (strain TN)</name>
    <dbReference type="NCBI Taxonomy" id="272631"/>
    <lineage>
        <taxon>Bacteria</taxon>
        <taxon>Bacillati</taxon>
        <taxon>Actinomycetota</taxon>
        <taxon>Actinomycetes</taxon>
        <taxon>Mycobacteriales</taxon>
        <taxon>Mycobacteriaceae</taxon>
        <taxon>Mycobacterium</taxon>
    </lineage>
</organism>
<keyword id="KW-0067">ATP-binding</keyword>
<keyword id="KW-0436">Ligase</keyword>
<keyword id="KW-0547">Nucleotide-binding</keyword>
<keyword id="KW-0648">Protein biosynthesis</keyword>
<keyword id="KW-1185">Reference proteome</keyword>